<comment type="function">
    <text>Stimulates synthesis of ecdysteroid in the testes of larvae and pupae.</text>
</comment>
<reference key="1">
    <citation type="journal article" date="1997" name="Arch. Insect Biochem. Physiol.">
        <title>Naturally occurring analogs of Lymantria testis ecdysiotropin, a gonadotropin isolated from brains of Lymantria dispar pupae.</title>
        <authorList>
            <person name="Loeb M.J."/>
            <person name="Wagner R.M."/>
            <person name="Woods C.W."/>
            <person name="Gelman D.G."/>
            <person name="Harrison D."/>
            <person name="Bell R.A."/>
        </authorList>
    </citation>
    <scope>PROTEIN SEQUENCE</scope>
    <source>
        <tissue>Brain</tissue>
    </source>
</reference>
<accession>P80939</accession>
<protein>
    <recommendedName>
        <fullName>Testis ecdysiotropin peptide B</fullName>
        <shortName>TE</shortName>
    </recommendedName>
</protein>
<name>ECDB_LYMDI</name>
<organism>
    <name type="scientific">Lymantria dispar</name>
    <name type="common">Gypsy moth</name>
    <name type="synonym">Porthetria dispar</name>
    <dbReference type="NCBI Taxonomy" id="13123"/>
    <lineage>
        <taxon>Eukaryota</taxon>
        <taxon>Metazoa</taxon>
        <taxon>Ecdysozoa</taxon>
        <taxon>Arthropoda</taxon>
        <taxon>Hexapoda</taxon>
        <taxon>Insecta</taxon>
        <taxon>Pterygota</taxon>
        <taxon>Neoptera</taxon>
        <taxon>Endopterygota</taxon>
        <taxon>Lepidoptera</taxon>
        <taxon>Glossata</taxon>
        <taxon>Ditrysia</taxon>
        <taxon>Noctuoidea</taxon>
        <taxon>Erebidae</taxon>
        <taxon>Lymantriinae</taxon>
        <taxon>Lymantria</taxon>
    </lineage>
</organism>
<sequence length="23" mass="2551">SELTVEDVEPLNNADKNKVVIXI</sequence>
<keyword id="KW-0903">Direct protein sequencing</keyword>
<feature type="peptide" id="PRO_0000044136" description="Testis ecdysiotropin peptide B">
    <location>
        <begin position="1"/>
        <end position="23"/>
    </location>
</feature>
<proteinExistence type="evidence at protein level"/>